<organism>
    <name type="scientific">Vanderwaltozyma polyspora (strain ATCC 22028 / DSM 70294 / BCRC 21397 / CBS 2163 / NBRC 10782 / NRRL Y-8283 / UCD 57-17)</name>
    <name type="common">Kluyveromyces polysporus</name>
    <dbReference type="NCBI Taxonomy" id="436907"/>
    <lineage>
        <taxon>Eukaryota</taxon>
        <taxon>Fungi</taxon>
        <taxon>Dikarya</taxon>
        <taxon>Ascomycota</taxon>
        <taxon>Saccharomycotina</taxon>
        <taxon>Saccharomycetes</taxon>
        <taxon>Saccharomycetales</taxon>
        <taxon>Saccharomycetaceae</taxon>
        <taxon>Vanderwaltozyma</taxon>
    </lineage>
</organism>
<protein>
    <recommendedName>
        <fullName>Putative lipase ATG15</fullName>
        <ecNumber>3.1.1.3</ecNumber>
    </recommendedName>
    <alternativeName>
        <fullName>Autophagy-related protein 15</fullName>
    </alternativeName>
</protein>
<evidence type="ECO:0000250" key="1"/>
<evidence type="ECO:0000250" key="2">
    <source>
        <dbReference type="UniProtKB" id="P25641"/>
    </source>
</evidence>
<evidence type="ECO:0000255" key="3"/>
<evidence type="ECO:0000255" key="4">
    <source>
        <dbReference type="PROSITE-ProRule" id="PRU10037"/>
    </source>
</evidence>
<evidence type="ECO:0000256" key="5">
    <source>
        <dbReference type="SAM" id="MobiDB-lite"/>
    </source>
</evidence>
<evidence type="ECO:0000305" key="6"/>
<dbReference type="EC" id="3.1.1.3"/>
<dbReference type="EMBL" id="DS480385">
    <property type="protein sequence ID" value="EDO18770.1"/>
    <property type="molecule type" value="Genomic_DNA"/>
</dbReference>
<dbReference type="RefSeq" id="XP_001646628.1">
    <property type="nucleotide sequence ID" value="XM_001646578.1"/>
</dbReference>
<dbReference type="FunCoup" id="A7TG13">
    <property type="interactions" value="79"/>
</dbReference>
<dbReference type="STRING" id="436907.A7TG13"/>
<dbReference type="ESTHER" id="vanpo-atg15">
    <property type="family name" value="ATG15-related-lipase"/>
</dbReference>
<dbReference type="GlyCosmos" id="A7TG13">
    <property type="glycosylation" value="1 site, No reported glycans"/>
</dbReference>
<dbReference type="GeneID" id="5547084"/>
<dbReference type="KEGG" id="vpo:Kpol_1028p44"/>
<dbReference type="eggNOG" id="KOG4540">
    <property type="taxonomic scope" value="Eukaryota"/>
</dbReference>
<dbReference type="HOGENOM" id="CLU_028295_0_2_1"/>
<dbReference type="InParanoid" id="A7TG13"/>
<dbReference type="OMA" id="TYHFGHT"/>
<dbReference type="OrthoDB" id="58570at2759"/>
<dbReference type="Proteomes" id="UP000000267">
    <property type="component" value="Unassembled WGS sequence"/>
</dbReference>
<dbReference type="GO" id="GO:0005783">
    <property type="term" value="C:endoplasmic reticulum"/>
    <property type="evidence" value="ECO:0007669"/>
    <property type="project" value="EnsemblFungi"/>
</dbReference>
<dbReference type="GO" id="GO:0032585">
    <property type="term" value="C:multivesicular body membrane"/>
    <property type="evidence" value="ECO:0007669"/>
    <property type="project" value="UniProtKB-SubCell"/>
</dbReference>
<dbReference type="GO" id="GO:0005775">
    <property type="term" value="C:vacuolar lumen"/>
    <property type="evidence" value="ECO:0007669"/>
    <property type="project" value="EnsemblFungi"/>
</dbReference>
<dbReference type="GO" id="GO:0005774">
    <property type="term" value="C:vacuolar membrane"/>
    <property type="evidence" value="ECO:0007669"/>
    <property type="project" value="EnsemblFungi"/>
</dbReference>
<dbReference type="GO" id="GO:0004620">
    <property type="term" value="F:phospholipase activity"/>
    <property type="evidence" value="ECO:0007669"/>
    <property type="project" value="EnsemblFungi"/>
</dbReference>
<dbReference type="GO" id="GO:0004806">
    <property type="term" value="F:triacylglycerol lipase activity"/>
    <property type="evidence" value="ECO:0007669"/>
    <property type="project" value="UniProtKB-EC"/>
</dbReference>
<dbReference type="GO" id="GO:0034496">
    <property type="term" value="P:multivesicular body membrane disassembly"/>
    <property type="evidence" value="ECO:0007669"/>
    <property type="project" value="EnsemblFungi"/>
</dbReference>
<dbReference type="GO" id="GO:0046461">
    <property type="term" value="P:neutral lipid catabolic process"/>
    <property type="evidence" value="ECO:0007669"/>
    <property type="project" value="EnsemblFungi"/>
</dbReference>
<dbReference type="GO" id="GO:0000425">
    <property type="term" value="P:pexophagy"/>
    <property type="evidence" value="ECO:0007669"/>
    <property type="project" value="EnsemblFungi"/>
</dbReference>
<dbReference type="GO" id="GO:0006660">
    <property type="term" value="P:phosphatidylserine catabolic process"/>
    <property type="evidence" value="ECO:0007669"/>
    <property type="project" value="EnsemblFungi"/>
</dbReference>
<dbReference type="GO" id="GO:0034727">
    <property type="term" value="P:piecemeal microautophagy of the nucleus"/>
    <property type="evidence" value="ECO:0007669"/>
    <property type="project" value="EnsemblFungi"/>
</dbReference>
<dbReference type="GO" id="GO:0006624">
    <property type="term" value="P:vacuolar protein processing"/>
    <property type="evidence" value="ECO:0007669"/>
    <property type="project" value="EnsemblFungi"/>
</dbReference>
<dbReference type="CDD" id="cd00519">
    <property type="entry name" value="Lipase_3"/>
    <property type="match status" value="1"/>
</dbReference>
<dbReference type="Gene3D" id="3.40.50.1820">
    <property type="entry name" value="alpha/beta hydrolase"/>
    <property type="match status" value="1"/>
</dbReference>
<dbReference type="InterPro" id="IPR029058">
    <property type="entry name" value="AB_hydrolase_fold"/>
</dbReference>
<dbReference type="InterPro" id="IPR050805">
    <property type="entry name" value="ATG15_Lipase"/>
</dbReference>
<dbReference type="InterPro" id="IPR002921">
    <property type="entry name" value="Fungal_lipase-type"/>
</dbReference>
<dbReference type="PANTHER" id="PTHR47175">
    <property type="entry name" value="LIPASE ATG15-RELATED"/>
    <property type="match status" value="1"/>
</dbReference>
<dbReference type="PANTHER" id="PTHR47175:SF2">
    <property type="entry name" value="LIPASE ATG15-RELATED"/>
    <property type="match status" value="1"/>
</dbReference>
<dbReference type="Pfam" id="PF01764">
    <property type="entry name" value="Lipase_3"/>
    <property type="match status" value="1"/>
</dbReference>
<dbReference type="SUPFAM" id="SSF53474">
    <property type="entry name" value="alpha/beta-Hydrolases"/>
    <property type="match status" value="1"/>
</dbReference>
<dbReference type="PROSITE" id="PS00120">
    <property type="entry name" value="LIPASE_SER"/>
    <property type="match status" value="1"/>
</dbReference>
<gene>
    <name type="primary">ATG15</name>
    <name type="ORF">Kpol_1028p44</name>
</gene>
<comment type="function">
    <text evidence="1">Lipase which is essential for lysis of subvacuolar cytoplasm to vacuole targeted bodies and intravacuolar autophagic bodies. Involved in the lysis of intravacuolar multivesicular body (MVB) vesicles. The intravacuolar membrane disintegration by ATG15 is critical to life span extension (By similarity).</text>
</comment>
<comment type="catalytic activity">
    <reaction>
        <text>a triacylglycerol + H2O = a diacylglycerol + a fatty acid + H(+)</text>
        <dbReference type="Rhea" id="RHEA:12044"/>
        <dbReference type="ChEBI" id="CHEBI:15377"/>
        <dbReference type="ChEBI" id="CHEBI:15378"/>
        <dbReference type="ChEBI" id="CHEBI:17855"/>
        <dbReference type="ChEBI" id="CHEBI:18035"/>
        <dbReference type="ChEBI" id="CHEBI:28868"/>
        <dbReference type="EC" id="3.1.1.3"/>
    </reaction>
</comment>
<comment type="subunit">
    <text evidence="1">Binds to both phosphatidylinositol (PI) and phosphatidylinositol 3,5-bisphosphate (PIP2).</text>
</comment>
<comment type="subcellular location">
    <subcellularLocation>
        <location evidence="2">Endosome</location>
        <location evidence="2">Multivesicular body membrane</location>
        <topology evidence="2">Single-pass type II membrane protein</topology>
    </subcellularLocation>
    <subcellularLocation>
        <location evidence="2">Prevacuolar compartment membrane</location>
        <topology evidence="2">Single-pass type II membrane protein</topology>
    </subcellularLocation>
    <text evidence="2">From ER, targeted to vacuolar lumen at the MVB vesicles via the Golgi and the prevacuolar compartment (PVC).</text>
</comment>
<comment type="similarity">
    <text evidence="6">Belongs to the AB hydrolase superfamily. Lipase family.</text>
</comment>
<feature type="chain" id="PRO_0000317973" description="Putative lipase ATG15">
    <location>
        <begin position="1"/>
        <end position="565"/>
    </location>
</feature>
<feature type="topological domain" description="Cytoplasmic" evidence="1">
    <location>
        <begin position="1"/>
        <end position="21"/>
    </location>
</feature>
<feature type="transmembrane region" description="Helical; Signal-anchor for type II membrane protein">
    <location>
        <begin position="22"/>
        <end position="42"/>
    </location>
</feature>
<feature type="topological domain" description="Lumenal" evidence="1">
    <location>
        <begin position="43"/>
        <end position="565"/>
    </location>
</feature>
<feature type="region of interest" description="Disordered" evidence="5">
    <location>
        <begin position="488"/>
        <end position="538"/>
    </location>
</feature>
<feature type="compositionally biased region" description="Low complexity" evidence="5">
    <location>
        <begin position="493"/>
        <end position="518"/>
    </location>
</feature>
<feature type="compositionally biased region" description="Basic and acidic residues" evidence="5">
    <location>
        <begin position="519"/>
        <end position="528"/>
    </location>
</feature>
<feature type="active site" description="Charge relay system" evidence="4">
    <location>
        <position position="347"/>
    </location>
</feature>
<feature type="glycosylation site" description="N-linked (GlcNAc...) asparagine" evidence="3">
    <location>
        <position position="217"/>
    </location>
</feature>
<name>ATG15_VANPO</name>
<keyword id="KW-0072">Autophagy</keyword>
<keyword id="KW-0967">Endosome</keyword>
<keyword id="KW-0325">Glycoprotein</keyword>
<keyword id="KW-0378">Hydrolase</keyword>
<keyword id="KW-0442">Lipid degradation</keyword>
<keyword id="KW-0443">Lipid metabolism</keyword>
<keyword id="KW-0472">Membrane</keyword>
<keyword id="KW-1185">Reference proteome</keyword>
<keyword id="KW-0735">Signal-anchor</keyword>
<keyword id="KW-0812">Transmembrane</keyword>
<keyword id="KW-1133">Transmembrane helix</keyword>
<reference key="1">
    <citation type="journal article" date="2007" name="Proc. Natl. Acad. Sci. U.S.A.">
        <title>Independent sorting-out of thousands of duplicated gene pairs in two yeast species descended from a whole-genome duplication.</title>
        <authorList>
            <person name="Scannell D.R."/>
            <person name="Frank A.C."/>
            <person name="Conant G.C."/>
            <person name="Byrne K.P."/>
            <person name="Woolfit M."/>
            <person name="Wolfe K.H."/>
        </authorList>
    </citation>
    <scope>NUCLEOTIDE SEQUENCE [LARGE SCALE GENOMIC DNA]</scope>
    <source>
        <strain>ATCC 22028 / DSM 70294 / BCRC 21397 / CBS 2163 / NBRC 10782 / NRRL Y-8283 / UCD 57-17</strain>
    </source>
</reference>
<sequence length="565" mass="63915">MISNDYTKFSSKRRSLRYSNRILLLMGTILLIVVYFYSDILVDKSIIMFRNENKGQMLSGSFTLRHIYRHGVDKGHRTQEVLDITKQNEDAFGRYFKRELDEFNANAVGLNTDDPLRELWTSDKQFITDNPFNFKFGLKGNKQILHRMVDRDPSFIEPYLDFARESPDMAAKVTIDWVEGGEVVVVPDITDKNTVVSLALMSSNAYVRLPYTDDWRNVSLPWDSNDTPGYGWESNGIRGHVFVNDLENIVVISIKGTSAQGLPGSGEDETTGNDKLNDNLLFSCCCARVSYLWTTVCDCYLKSYTCDETCLEQAIKEKDHYYQAAMDIYKDTLRQYPHATIWLTGHSLGGALASLVGRTYGLPTVAFESPGELLAAKRLHLPFPPGLPSYDEGIWHIGHTADPIYMGTCNGASSTCSIAGYAMETGCHSGKQCVYDVVRDKGWHVNMLNHRIHTVIDGILTKYDKVATCHEPDPCVDCYNWNFMPHGKKPKKQTTSSSSEKVDTSTTKSIDRTTITTRTNEKKWHPNPKDPSTTTTDDKTLMSSCLHRNWVGICTEYTTFTKRLI</sequence>
<accession>A7TG13</accession>
<proteinExistence type="inferred from homology"/>